<proteinExistence type="inferred from homology"/>
<evidence type="ECO:0000255" key="1">
    <source>
        <dbReference type="HAMAP-Rule" id="MF_01060"/>
    </source>
</evidence>
<evidence type="ECO:0000256" key="2">
    <source>
        <dbReference type="SAM" id="MobiDB-lite"/>
    </source>
</evidence>
<organism>
    <name type="scientific">Salmonella schwarzengrund (strain CVM19633)</name>
    <dbReference type="NCBI Taxonomy" id="439843"/>
    <lineage>
        <taxon>Bacteria</taxon>
        <taxon>Pseudomonadati</taxon>
        <taxon>Pseudomonadota</taxon>
        <taxon>Gammaproteobacteria</taxon>
        <taxon>Enterobacterales</taxon>
        <taxon>Enterobacteriaceae</taxon>
        <taxon>Salmonella</taxon>
    </lineage>
</organism>
<dbReference type="EC" id="3.2.1.28" evidence="1"/>
<dbReference type="EMBL" id="CP001127">
    <property type="protein sequence ID" value="ACF92363.1"/>
    <property type="molecule type" value="Genomic_DNA"/>
</dbReference>
<dbReference type="RefSeq" id="WP_000612816.1">
    <property type="nucleotide sequence ID" value="NC_011094.1"/>
</dbReference>
<dbReference type="SMR" id="B4TXW7"/>
<dbReference type="CAZy" id="GH37">
    <property type="family name" value="Glycoside Hydrolase Family 37"/>
</dbReference>
<dbReference type="KEGG" id="sew:SeSA_A1938"/>
<dbReference type="HOGENOM" id="CLU_006451_3_1_6"/>
<dbReference type="Proteomes" id="UP000001865">
    <property type="component" value="Chromosome"/>
</dbReference>
<dbReference type="GO" id="GO:0042597">
    <property type="term" value="C:periplasmic space"/>
    <property type="evidence" value="ECO:0007669"/>
    <property type="project" value="UniProtKB-SubCell"/>
</dbReference>
<dbReference type="GO" id="GO:0004555">
    <property type="term" value="F:alpha,alpha-trehalase activity"/>
    <property type="evidence" value="ECO:0007669"/>
    <property type="project" value="UniProtKB-UniRule"/>
</dbReference>
<dbReference type="GO" id="GO:0071474">
    <property type="term" value="P:cellular hyperosmotic response"/>
    <property type="evidence" value="ECO:0007669"/>
    <property type="project" value="InterPro"/>
</dbReference>
<dbReference type="GO" id="GO:0005993">
    <property type="term" value="P:trehalose catabolic process"/>
    <property type="evidence" value="ECO:0007669"/>
    <property type="project" value="InterPro"/>
</dbReference>
<dbReference type="FunFam" id="1.50.10.10:FF:000003">
    <property type="entry name" value="Cytoplasmic trehalase"/>
    <property type="match status" value="1"/>
</dbReference>
<dbReference type="Gene3D" id="1.50.10.10">
    <property type="match status" value="1"/>
</dbReference>
<dbReference type="HAMAP" id="MF_01060">
    <property type="entry name" value="Peripl_trehalase"/>
    <property type="match status" value="1"/>
</dbReference>
<dbReference type="InterPro" id="IPR008928">
    <property type="entry name" value="6-hairpin_glycosidase_sf"/>
</dbReference>
<dbReference type="InterPro" id="IPR012341">
    <property type="entry name" value="6hp_glycosidase-like_sf"/>
</dbReference>
<dbReference type="InterPro" id="IPR001661">
    <property type="entry name" value="Glyco_hydro_37"/>
</dbReference>
<dbReference type="InterPro" id="IPR018232">
    <property type="entry name" value="Glyco_hydro_37_CS"/>
</dbReference>
<dbReference type="InterPro" id="IPR023720">
    <property type="entry name" value="Trehalase_periplasmic"/>
</dbReference>
<dbReference type="NCBIfam" id="NF009773">
    <property type="entry name" value="PRK13270.1"/>
    <property type="match status" value="1"/>
</dbReference>
<dbReference type="NCBIfam" id="NF009774">
    <property type="entry name" value="PRK13271.1"/>
    <property type="match status" value="1"/>
</dbReference>
<dbReference type="PANTHER" id="PTHR23403">
    <property type="entry name" value="TREHALASE"/>
    <property type="match status" value="1"/>
</dbReference>
<dbReference type="PANTHER" id="PTHR23403:SF1">
    <property type="entry name" value="TREHALASE"/>
    <property type="match status" value="1"/>
</dbReference>
<dbReference type="Pfam" id="PF01204">
    <property type="entry name" value="Trehalase"/>
    <property type="match status" value="1"/>
</dbReference>
<dbReference type="PRINTS" id="PR00744">
    <property type="entry name" value="GLHYDRLASE37"/>
</dbReference>
<dbReference type="SUPFAM" id="SSF48208">
    <property type="entry name" value="Six-hairpin glycosidases"/>
    <property type="match status" value="1"/>
</dbReference>
<dbReference type="PROSITE" id="PS00927">
    <property type="entry name" value="TREHALASE_1"/>
    <property type="match status" value="1"/>
</dbReference>
<dbReference type="PROSITE" id="PS00928">
    <property type="entry name" value="TREHALASE_2"/>
    <property type="match status" value="1"/>
</dbReference>
<name>TREA_SALSV</name>
<protein>
    <recommendedName>
        <fullName evidence="1">Periplasmic trehalase</fullName>
        <ecNumber evidence="1">3.2.1.28</ecNumber>
    </recommendedName>
    <alternativeName>
        <fullName evidence="1">Alpha,alpha-trehalase</fullName>
    </alternativeName>
    <alternativeName>
        <fullName evidence="1">Alpha,alpha-trehalose glucohydrolase</fullName>
    </alternativeName>
</protein>
<comment type="function">
    <text evidence="1">Provides the cells with the ability to utilize trehalose at high osmolarity by splitting it into glucose molecules that can subsequently be taken up by the phosphotransferase-mediated uptake system.</text>
</comment>
<comment type="catalytic activity">
    <reaction evidence="1">
        <text>alpha,alpha-trehalose + H2O = alpha-D-glucose + beta-D-glucose</text>
        <dbReference type="Rhea" id="RHEA:32675"/>
        <dbReference type="ChEBI" id="CHEBI:15377"/>
        <dbReference type="ChEBI" id="CHEBI:15903"/>
        <dbReference type="ChEBI" id="CHEBI:16551"/>
        <dbReference type="ChEBI" id="CHEBI:17925"/>
        <dbReference type="EC" id="3.2.1.28"/>
    </reaction>
</comment>
<comment type="subunit">
    <text evidence="1">Monomer.</text>
</comment>
<comment type="subcellular location">
    <subcellularLocation>
        <location evidence="1">Periplasm</location>
    </subcellularLocation>
</comment>
<comment type="similarity">
    <text evidence="1">Belongs to the glycosyl hydrolase 37 family.</text>
</comment>
<accession>B4TXW7</accession>
<sequence>MIPPEIRRSVLLQKAIKLALAGTLLTFASFSATAADPSSDTETPQPPDILLGPLFNDVQNAKLFPDQKTFADAIPNSDPLMILADYRMQRNQSGFDLRHFVDVNFTLPKAGEKYVPPAGQSLREHIDGLWPVLTRSTKNVEKWDSLLPLPESYVVPGGRFREIYYWDSYFTMLGLAESGHWDKVADMVANFGYEIDAWGHIPNGNRTYYLSRSQPPFFAFMIELLAQHEGDDALKEYLPQLQKEYAYWMEGVETLQPGQQNQRVVKLEDGSVLNRYWDDRDTPRPESWVEDIATAKSNPNRPATEIYRDLRSAAASGWDFSSRWMDNPQQLSTIRTTTIVPVDLNALLYQLEKTLARASAAAGDRAEASQYDALANARQKAIEMHLWNNKEGWYADYDLQNNKIRDQLTAAALFPLYVNAAAKDRAVKVAAAAQAHLLQPGGLATTSVKSGQQWDAPNGWAPLQWVAAEGLQNYGQDDVAMEVTWRFLTNVQHTYDREKKLVEKYDVSSTGTGGGGGEYPLQDGFGWTNGVTLKMLDLICPQEKPCDSVPSTRPASLSATPTKTPSAATQ</sequence>
<reference key="1">
    <citation type="journal article" date="2011" name="J. Bacteriol.">
        <title>Comparative genomics of 28 Salmonella enterica isolates: evidence for CRISPR-mediated adaptive sublineage evolution.</title>
        <authorList>
            <person name="Fricke W.F."/>
            <person name="Mammel M.K."/>
            <person name="McDermott P.F."/>
            <person name="Tartera C."/>
            <person name="White D.G."/>
            <person name="Leclerc J.E."/>
            <person name="Ravel J."/>
            <person name="Cebula T.A."/>
        </authorList>
    </citation>
    <scope>NUCLEOTIDE SEQUENCE [LARGE SCALE GENOMIC DNA]</scope>
    <source>
        <strain>CVM19633</strain>
    </source>
</reference>
<keyword id="KW-0326">Glycosidase</keyword>
<keyword id="KW-0378">Hydrolase</keyword>
<keyword id="KW-0574">Periplasm</keyword>
<keyword id="KW-0732">Signal</keyword>
<feature type="signal peptide" evidence="1">
    <location>
        <begin position="1"/>
        <end position="34"/>
    </location>
</feature>
<feature type="chain" id="PRO_1000136427" description="Periplasmic trehalase">
    <location>
        <begin position="35"/>
        <end position="570"/>
    </location>
</feature>
<feature type="region of interest" description="Disordered" evidence="2">
    <location>
        <begin position="544"/>
        <end position="570"/>
    </location>
</feature>
<feature type="compositionally biased region" description="Low complexity" evidence="2">
    <location>
        <begin position="554"/>
        <end position="570"/>
    </location>
</feature>
<feature type="active site" description="Proton donor/acceptor" evidence="1">
    <location>
        <position position="319"/>
    </location>
</feature>
<feature type="active site" description="Proton donor/acceptor" evidence="1">
    <location>
        <position position="503"/>
    </location>
</feature>
<feature type="binding site" evidence="1">
    <location>
        <position position="159"/>
    </location>
    <ligand>
        <name>substrate</name>
    </ligand>
</feature>
<feature type="binding site" evidence="1">
    <location>
        <begin position="166"/>
        <end position="167"/>
    </location>
    <ligand>
        <name>substrate</name>
    </ligand>
</feature>
<feature type="binding site" evidence="1">
    <location>
        <position position="203"/>
    </location>
    <ligand>
        <name>substrate</name>
    </ligand>
</feature>
<feature type="binding site" evidence="1">
    <location>
        <begin position="212"/>
        <end position="214"/>
    </location>
    <ligand>
        <name>substrate</name>
    </ligand>
</feature>
<feature type="binding site" evidence="1">
    <location>
        <begin position="284"/>
        <end position="286"/>
    </location>
    <ligand>
        <name>substrate</name>
    </ligand>
</feature>
<feature type="binding site" evidence="1">
    <location>
        <position position="317"/>
    </location>
    <ligand>
        <name>substrate</name>
    </ligand>
</feature>
<feature type="binding site" evidence="1">
    <location>
        <position position="518"/>
    </location>
    <ligand>
        <name>substrate</name>
    </ligand>
</feature>
<gene>
    <name evidence="1" type="primary">treA</name>
    <name type="ordered locus">SeSA_A1938</name>
</gene>